<reference key="1">
    <citation type="journal article" date="2009" name="Appl. Environ. Microbiol.">
        <title>Three genomes from the phylum Acidobacteria provide insight into the lifestyles of these microorganisms in soils.</title>
        <authorList>
            <person name="Ward N.L."/>
            <person name="Challacombe J.F."/>
            <person name="Janssen P.H."/>
            <person name="Henrissat B."/>
            <person name="Coutinho P.M."/>
            <person name="Wu M."/>
            <person name="Xie G."/>
            <person name="Haft D.H."/>
            <person name="Sait M."/>
            <person name="Badger J."/>
            <person name="Barabote R.D."/>
            <person name="Bradley B."/>
            <person name="Brettin T.S."/>
            <person name="Brinkac L.M."/>
            <person name="Bruce D."/>
            <person name="Creasy T."/>
            <person name="Daugherty S.C."/>
            <person name="Davidsen T.M."/>
            <person name="DeBoy R.T."/>
            <person name="Detter J.C."/>
            <person name="Dodson R.J."/>
            <person name="Durkin A.S."/>
            <person name="Ganapathy A."/>
            <person name="Gwinn-Giglio M."/>
            <person name="Han C.S."/>
            <person name="Khouri H."/>
            <person name="Kiss H."/>
            <person name="Kothari S.P."/>
            <person name="Madupu R."/>
            <person name="Nelson K.E."/>
            <person name="Nelson W.C."/>
            <person name="Paulsen I."/>
            <person name="Penn K."/>
            <person name="Ren Q."/>
            <person name="Rosovitz M.J."/>
            <person name="Selengut J.D."/>
            <person name="Shrivastava S."/>
            <person name="Sullivan S.A."/>
            <person name="Tapia R."/>
            <person name="Thompson L.S."/>
            <person name="Watkins K.L."/>
            <person name="Yang Q."/>
            <person name="Yu C."/>
            <person name="Zafar N."/>
            <person name="Zhou L."/>
            <person name="Kuske C.R."/>
        </authorList>
    </citation>
    <scope>NUCLEOTIDE SEQUENCE [LARGE SCALE GENOMIC DNA]</scope>
    <source>
        <strain>Ellin6076</strain>
    </source>
</reference>
<sequence length="418" mass="44759">MSDSALLNCRQLVTLAGPPGPRTGPAMRELAIIPDGAMRIRDGCIAAVGPRADIVRSLAGDTEVIDAGWRVVLPGFIDAHTHPVFAGTRAAEYEQRAEGATYAEIAAAGGGIRSTVRRTREAGDLELATAARRYTDWFLRGGTTTIEAKSGYGLSLDDELRILKTIRLLNAERRLRYVPTFLGAHEIPDEYRGEIEDYVDLVIQEMLPAVAEDNLAEYCDVFCEPNVFPLDPARAILQAAQSLGLRLRIHADQFTGDYAALLAAELGAATADHLESTTALGLAALHEAGVQPVLLPASVYNLGSARYPAARDMIARGMAVVLATDFNPGSSPTASIPMVLSLASTQMKMTPAESITAVTVNAAHSLGRGSRIGSLEPGKAADFAIHECDDYRELAYFFGREPANAVYLAGQCVYRRSA</sequence>
<protein>
    <recommendedName>
        <fullName evidence="1">Imidazolonepropionase</fullName>
        <ecNumber evidence="1">3.5.2.7</ecNumber>
    </recommendedName>
    <alternativeName>
        <fullName evidence="1">Imidazolone-5-propionate hydrolase</fullName>
    </alternativeName>
</protein>
<keyword id="KW-0963">Cytoplasm</keyword>
<keyword id="KW-0369">Histidine metabolism</keyword>
<keyword id="KW-0378">Hydrolase</keyword>
<keyword id="KW-0408">Iron</keyword>
<keyword id="KW-0479">Metal-binding</keyword>
<keyword id="KW-0862">Zinc</keyword>
<dbReference type="EC" id="3.5.2.7" evidence="1"/>
<dbReference type="EMBL" id="CP000473">
    <property type="protein sequence ID" value="ABJ86160.1"/>
    <property type="molecule type" value="Genomic_DNA"/>
</dbReference>
<dbReference type="SMR" id="Q01W05"/>
<dbReference type="STRING" id="234267.Acid_5207"/>
<dbReference type="KEGG" id="sus:Acid_5207"/>
<dbReference type="eggNOG" id="COG1228">
    <property type="taxonomic scope" value="Bacteria"/>
</dbReference>
<dbReference type="HOGENOM" id="CLU_041647_0_1_0"/>
<dbReference type="InParanoid" id="Q01W05"/>
<dbReference type="OrthoDB" id="9776455at2"/>
<dbReference type="UniPathway" id="UPA00379">
    <property type="reaction ID" value="UER00551"/>
</dbReference>
<dbReference type="GO" id="GO:0005737">
    <property type="term" value="C:cytoplasm"/>
    <property type="evidence" value="ECO:0007669"/>
    <property type="project" value="UniProtKB-SubCell"/>
</dbReference>
<dbReference type="GO" id="GO:0050480">
    <property type="term" value="F:imidazolonepropionase activity"/>
    <property type="evidence" value="ECO:0007669"/>
    <property type="project" value="UniProtKB-UniRule"/>
</dbReference>
<dbReference type="GO" id="GO:0005506">
    <property type="term" value="F:iron ion binding"/>
    <property type="evidence" value="ECO:0007669"/>
    <property type="project" value="UniProtKB-UniRule"/>
</dbReference>
<dbReference type="GO" id="GO:0008270">
    <property type="term" value="F:zinc ion binding"/>
    <property type="evidence" value="ECO:0007669"/>
    <property type="project" value="UniProtKB-UniRule"/>
</dbReference>
<dbReference type="GO" id="GO:0019556">
    <property type="term" value="P:L-histidine catabolic process to glutamate and formamide"/>
    <property type="evidence" value="ECO:0007669"/>
    <property type="project" value="UniProtKB-UniPathway"/>
</dbReference>
<dbReference type="GO" id="GO:0019557">
    <property type="term" value="P:L-histidine catabolic process to glutamate and formate"/>
    <property type="evidence" value="ECO:0007669"/>
    <property type="project" value="UniProtKB-UniPathway"/>
</dbReference>
<dbReference type="FunFam" id="3.20.20.140:FF:000007">
    <property type="entry name" value="Imidazolonepropionase"/>
    <property type="match status" value="1"/>
</dbReference>
<dbReference type="Gene3D" id="3.20.20.140">
    <property type="entry name" value="Metal-dependent hydrolases"/>
    <property type="match status" value="1"/>
</dbReference>
<dbReference type="Gene3D" id="2.30.40.10">
    <property type="entry name" value="Urease, subunit C, domain 1"/>
    <property type="match status" value="1"/>
</dbReference>
<dbReference type="HAMAP" id="MF_00372">
    <property type="entry name" value="HutI"/>
    <property type="match status" value="1"/>
</dbReference>
<dbReference type="InterPro" id="IPR006680">
    <property type="entry name" value="Amidohydro-rel"/>
</dbReference>
<dbReference type="InterPro" id="IPR005920">
    <property type="entry name" value="HutI"/>
</dbReference>
<dbReference type="InterPro" id="IPR011059">
    <property type="entry name" value="Metal-dep_hydrolase_composite"/>
</dbReference>
<dbReference type="InterPro" id="IPR032466">
    <property type="entry name" value="Metal_Hydrolase"/>
</dbReference>
<dbReference type="NCBIfam" id="TIGR01224">
    <property type="entry name" value="hutI"/>
    <property type="match status" value="1"/>
</dbReference>
<dbReference type="PANTHER" id="PTHR42752">
    <property type="entry name" value="IMIDAZOLONEPROPIONASE"/>
    <property type="match status" value="1"/>
</dbReference>
<dbReference type="PANTHER" id="PTHR42752:SF1">
    <property type="entry name" value="IMIDAZOLONEPROPIONASE-RELATED"/>
    <property type="match status" value="1"/>
</dbReference>
<dbReference type="Pfam" id="PF01979">
    <property type="entry name" value="Amidohydro_1"/>
    <property type="match status" value="1"/>
</dbReference>
<dbReference type="SUPFAM" id="SSF51338">
    <property type="entry name" value="Composite domain of metallo-dependent hydrolases"/>
    <property type="match status" value="1"/>
</dbReference>
<dbReference type="SUPFAM" id="SSF51556">
    <property type="entry name" value="Metallo-dependent hydrolases"/>
    <property type="match status" value="1"/>
</dbReference>
<feature type="chain" id="PRO_0000306517" description="Imidazolonepropionase">
    <location>
        <begin position="1"/>
        <end position="418"/>
    </location>
</feature>
<feature type="binding site" evidence="1">
    <location>
        <position position="80"/>
    </location>
    <ligand>
        <name>Fe(3+)</name>
        <dbReference type="ChEBI" id="CHEBI:29034"/>
    </ligand>
</feature>
<feature type="binding site" evidence="1">
    <location>
        <position position="80"/>
    </location>
    <ligand>
        <name>Zn(2+)</name>
        <dbReference type="ChEBI" id="CHEBI:29105"/>
    </ligand>
</feature>
<feature type="binding site" evidence="1">
    <location>
        <position position="82"/>
    </location>
    <ligand>
        <name>Fe(3+)</name>
        <dbReference type="ChEBI" id="CHEBI:29034"/>
    </ligand>
</feature>
<feature type="binding site" evidence="1">
    <location>
        <position position="82"/>
    </location>
    <ligand>
        <name>Zn(2+)</name>
        <dbReference type="ChEBI" id="CHEBI:29105"/>
    </ligand>
</feature>
<feature type="binding site" evidence="1">
    <location>
        <position position="89"/>
    </location>
    <ligand>
        <name>4-imidazolone-5-propanoate</name>
        <dbReference type="ChEBI" id="CHEBI:77893"/>
    </ligand>
</feature>
<feature type="binding site" evidence="1">
    <location>
        <position position="152"/>
    </location>
    <ligand>
        <name>4-imidazolone-5-propanoate</name>
        <dbReference type="ChEBI" id="CHEBI:77893"/>
    </ligand>
</feature>
<feature type="binding site" evidence="1">
    <location>
        <position position="152"/>
    </location>
    <ligand>
        <name>N-formimidoyl-L-glutamate</name>
        <dbReference type="ChEBI" id="CHEBI:58928"/>
    </ligand>
</feature>
<feature type="binding site" evidence="1">
    <location>
        <position position="185"/>
    </location>
    <ligand>
        <name>4-imidazolone-5-propanoate</name>
        <dbReference type="ChEBI" id="CHEBI:77893"/>
    </ligand>
</feature>
<feature type="binding site" evidence="1">
    <location>
        <position position="250"/>
    </location>
    <ligand>
        <name>Fe(3+)</name>
        <dbReference type="ChEBI" id="CHEBI:29034"/>
    </ligand>
</feature>
<feature type="binding site" evidence="1">
    <location>
        <position position="250"/>
    </location>
    <ligand>
        <name>Zn(2+)</name>
        <dbReference type="ChEBI" id="CHEBI:29105"/>
    </ligand>
</feature>
<feature type="binding site" evidence="1">
    <location>
        <position position="253"/>
    </location>
    <ligand>
        <name>4-imidazolone-5-propanoate</name>
        <dbReference type="ChEBI" id="CHEBI:77893"/>
    </ligand>
</feature>
<feature type="binding site" evidence="1">
    <location>
        <position position="325"/>
    </location>
    <ligand>
        <name>Fe(3+)</name>
        <dbReference type="ChEBI" id="CHEBI:29034"/>
    </ligand>
</feature>
<feature type="binding site" evidence="1">
    <location>
        <position position="325"/>
    </location>
    <ligand>
        <name>Zn(2+)</name>
        <dbReference type="ChEBI" id="CHEBI:29105"/>
    </ligand>
</feature>
<feature type="binding site" evidence="1">
    <location>
        <position position="327"/>
    </location>
    <ligand>
        <name>N-formimidoyl-L-glutamate</name>
        <dbReference type="ChEBI" id="CHEBI:58928"/>
    </ligand>
</feature>
<feature type="binding site" evidence="1">
    <location>
        <position position="329"/>
    </location>
    <ligand>
        <name>N-formimidoyl-L-glutamate</name>
        <dbReference type="ChEBI" id="CHEBI:58928"/>
    </ligand>
</feature>
<feature type="binding site" evidence="1">
    <location>
        <position position="330"/>
    </location>
    <ligand>
        <name>4-imidazolone-5-propanoate</name>
        <dbReference type="ChEBI" id="CHEBI:77893"/>
    </ligand>
</feature>
<gene>
    <name evidence="1" type="primary">hutI</name>
    <name type="ordered locus">Acid_5207</name>
</gene>
<comment type="function">
    <text evidence="1">Catalyzes the hydrolytic cleavage of the carbon-nitrogen bond in imidazolone-5-propanoate to yield N-formimidoyl-L-glutamate. It is the third step in the universal histidine degradation pathway.</text>
</comment>
<comment type="catalytic activity">
    <reaction evidence="1">
        <text>4-imidazolone-5-propanoate + H2O = N-formimidoyl-L-glutamate</text>
        <dbReference type="Rhea" id="RHEA:23660"/>
        <dbReference type="ChEBI" id="CHEBI:15377"/>
        <dbReference type="ChEBI" id="CHEBI:58928"/>
        <dbReference type="ChEBI" id="CHEBI:77893"/>
        <dbReference type="EC" id="3.5.2.7"/>
    </reaction>
</comment>
<comment type="cofactor">
    <cofactor evidence="1">
        <name>Zn(2+)</name>
        <dbReference type="ChEBI" id="CHEBI:29105"/>
    </cofactor>
    <cofactor evidence="1">
        <name>Fe(3+)</name>
        <dbReference type="ChEBI" id="CHEBI:29034"/>
    </cofactor>
    <text evidence="1">Binds 1 zinc or iron ion per subunit.</text>
</comment>
<comment type="pathway">
    <text evidence="1">Amino-acid degradation; L-histidine degradation into L-glutamate; N-formimidoyl-L-glutamate from L-histidine: step 3/3.</text>
</comment>
<comment type="subcellular location">
    <subcellularLocation>
        <location evidence="1">Cytoplasm</location>
    </subcellularLocation>
</comment>
<comment type="similarity">
    <text evidence="1">Belongs to the metallo-dependent hydrolases superfamily. HutI family.</text>
</comment>
<evidence type="ECO:0000255" key="1">
    <source>
        <dbReference type="HAMAP-Rule" id="MF_00372"/>
    </source>
</evidence>
<proteinExistence type="inferred from homology"/>
<name>HUTI_SOLUE</name>
<organism>
    <name type="scientific">Solibacter usitatus (strain Ellin6076)</name>
    <dbReference type="NCBI Taxonomy" id="234267"/>
    <lineage>
        <taxon>Bacteria</taxon>
        <taxon>Pseudomonadati</taxon>
        <taxon>Acidobacteriota</taxon>
        <taxon>Terriglobia</taxon>
        <taxon>Bryobacterales</taxon>
        <taxon>Solibacteraceae</taxon>
        <taxon>Candidatus Solibacter</taxon>
    </lineage>
</organism>
<accession>Q01W05</accession>